<reference key="1">
    <citation type="journal article" date="2009" name="Stand. Genomic Sci.">
        <title>Complete genome sequence of Leptotrichia buccalis type strain (C-1013-b).</title>
        <authorList>
            <person name="Ivanova N."/>
            <person name="Gronow S."/>
            <person name="Lapidus A."/>
            <person name="Copeland A."/>
            <person name="Glavina Del Rio T."/>
            <person name="Nolan M."/>
            <person name="Lucas S."/>
            <person name="Chen F."/>
            <person name="Tice H."/>
            <person name="Cheng J.F."/>
            <person name="Saunders E."/>
            <person name="Bruce D."/>
            <person name="Goodwin L."/>
            <person name="Brettin T."/>
            <person name="Detter J.C."/>
            <person name="Han C."/>
            <person name="Pitluck S."/>
            <person name="Mikhailova N."/>
            <person name="Pati A."/>
            <person name="Mavrommatis K."/>
            <person name="Chen A."/>
            <person name="Palaniappan K."/>
            <person name="Land M."/>
            <person name="Hauser L."/>
            <person name="Chang Y.J."/>
            <person name="Jeffries C.D."/>
            <person name="Chain P."/>
            <person name="Rohde C."/>
            <person name="Goker M."/>
            <person name="Bristow J."/>
            <person name="Eisen J.A."/>
            <person name="Markowitz V."/>
            <person name="Hugenholtz P."/>
            <person name="Kyrpides N.C."/>
            <person name="Klenk H.P."/>
        </authorList>
    </citation>
    <scope>NUCLEOTIDE SEQUENCE [LARGE SCALE GENOMIC DNA]</scope>
    <source>
        <strain>ATCC 14201 / DSM 1135 / JCM 12969 / NCTC 10249 / C-1013-b</strain>
    </source>
</reference>
<reference key="2">
    <citation type="journal article" date="2012" name="Mol. Oral. Microbiol.">
        <title>Metabolism of sugars by genetically diverse species of oral Leptotrichia.</title>
        <authorList>
            <person name="Thompson J."/>
            <person name="Pikis A."/>
        </authorList>
    </citation>
    <scope>FUNCTION</scope>
    <source>
        <strain>ATCC 14201 / DSM 1135 / JCM 12969 / NCTC 10249 / C-1013-b</strain>
    </source>
</reference>
<sequence>MMKKVQRFGGAMMAPVLLFAFTGIVVGLSSVFTNTEVMGKIAEEGTVWYNFWYVISEGGWTVFRQMPILFAIGLPISLATKTNARACMETFALYTTFNYFVAAILKVFYGIDAAKQVADKVTGYSAIGGVPTLDTNLFGGILIAALVVYLHNKYFDKKLPDFLGVFQGSVFVYIVGFVVMIPCAFLTVLIWPKFQMGISALQGFMKASGIFGVWIYTFLERILIPTGLHHFVYTPFVFGPAAVPDGIQVYWVQHIKEFAQSTQSLKSLFPQGGFALHGNSKIFGAPGIALAMYATAKSDKKKAVAALLIPIIFTAVISGITEPLEFTFLFIAPVLFAVHACLAATMAATMYAFGVVGNMGGGLLDFFFLNWIPMFKNHSGTVIAQIVIGLIFTAIYFVVFRFLILKMDLKTPGREDEDEEMKLYSKADYRAKHGEGDAKGGVSSAEDEYAQKGAIILEALGGKENIEELNNCATRLRVSVKDASKLLPDAAFKAAGAHGVVRKGTAIQVIIGLSVPQVRERIEEMMKKG</sequence>
<gene>
    <name type="ordered locus">Lebu_1527</name>
</gene>
<comment type="function">
    <text evidence="3">The phosphoenolpyruvate-dependent sugar phosphotransferase system (sugar PTS), a major carbohydrate active -transport system, catalyzes the phosphorylation of incoming sugar substrates concomitantly with their translocation across the cell membrane. This system is probably involved in transport of the alpha-glucosides trehalulose, turanose, maltulose and palatinose.</text>
</comment>
<comment type="subcellular location">
    <subcellularLocation>
        <location evidence="2">Cell membrane</location>
        <topology evidence="2">Multi-pass membrane protein</topology>
    </subcellularLocation>
</comment>
<comment type="domain">
    <text>The EIIC domain forms the PTS system translocation channel and contains the specific substrate-binding site.</text>
</comment>
<comment type="domain">
    <text>The EIIB domain is phosphorylated by phospho-EIIA on a cysteinyl or histidyl residue, depending on the transported sugar. Then, it transfers the phosphoryl group to the sugar substrate concomitantly with the sugar uptake processed by the EIIC domain.</text>
</comment>
<accession>C7NB69</accession>
<organism>
    <name type="scientific">Leptotrichia buccalis (strain ATCC 14201 / DSM 1135 / JCM 12969 / NCTC 10249 / C-1013-b)</name>
    <dbReference type="NCBI Taxonomy" id="523794"/>
    <lineage>
        <taxon>Bacteria</taxon>
        <taxon>Fusobacteriati</taxon>
        <taxon>Fusobacteriota</taxon>
        <taxon>Fusobacteriia</taxon>
        <taxon>Fusobacteriales</taxon>
        <taxon>Leptotrichiaceae</taxon>
        <taxon>Leptotrichia</taxon>
    </lineage>
</organism>
<keyword id="KW-1003">Cell membrane</keyword>
<keyword id="KW-0418">Kinase</keyword>
<keyword id="KW-0472">Membrane</keyword>
<keyword id="KW-0598">Phosphotransferase system</keyword>
<keyword id="KW-0762">Sugar transport</keyword>
<keyword id="KW-0808">Transferase</keyword>
<keyword id="KW-0812">Transmembrane</keyword>
<keyword id="KW-1133">Transmembrane helix</keyword>
<keyword id="KW-0813">Transport</keyword>
<proteinExistence type="inferred from homology"/>
<protein>
    <recommendedName>
        <fullName>PTS system alpha-glucoside-specific EIICB component</fullName>
    </recommendedName>
    <domain>
        <recommendedName>
            <fullName>Alpha-glucoside permease IIC component</fullName>
        </recommendedName>
        <alternativeName>
            <fullName>PTS system alpha-glucoside-specific EIIC component</fullName>
        </alternativeName>
    </domain>
    <domain>
        <recommendedName>
            <fullName>Alpha-glucoside-specific phosphotransferase enzyme IIB component</fullName>
            <ecNumber>2.7.1.-</ecNumber>
        </recommendedName>
        <alternativeName>
            <fullName>PTS system alpha-glucoside-specific EIIB component</fullName>
        </alternativeName>
    </domain>
</protein>
<feature type="chain" id="PRO_5000507514" description="PTS system alpha-glucoside-specific EIICB component">
    <location>
        <begin position="1"/>
        <end position="529"/>
    </location>
</feature>
<feature type="transmembrane region" description="Helical" evidence="2">
    <location>
        <begin position="8"/>
        <end position="28"/>
    </location>
</feature>
<feature type="transmembrane region" description="Helical" evidence="2">
    <location>
        <begin position="59"/>
        <end position="79"/>
    </location>
</feature>
<feature type="transmembrane region" description="Helical" evidence="2">
    <location>
        <begin position="91"/>
        <end position="111"/>
    </location>
</feature>
<feature type="transmembrane region" description="Helical" evidence="2">
    <location>
        <begin position="130"/>
        <end position="150"/>
    </location>
</feature>
<feature type="transmembrane region" description="Helical" evidence="2">
    <location>
        <begin position="170"/>
        <end position="190"/>
    </location>
</feature>
<feature type="transmembrane region" description="Helical" evidence="2">
    <location>
        <begin position="198"/>
        <end position="218"/>
    </location>
</feature>
<feature type="transmembrane region" description="Helical" evidence="2">
    <location>
        <begin position="222"/>
        <end position="242"/>
    </location>
</feature>
<feature type="transmembrane region" description="Helical" evidence="2">
    <location>
        <begin position="272"/>
        <end position="292"/>
    </location>
</feature>
<feature type="transmembrane region" description="Helical" evidence="2">
    <location>
        <begin position="304"/>
        <end position="324"/>
    </location>
</feature>
<feature type="transmembrane region" description="Helical" evidence="2">
    <location>
        <begin position="328"/>
        <end position="348"/>
    </location>
</feature>
<feature type="transmembrane region" description="Helical" evidence="2">
    <location>
        <begin position="352"/>
        <end position="372"/>
    </location>
</feature>
<feature type="transmembrane region" description="Helical" evidence="2">
    <location>
        <begin position="380"/>
        <end position="400"/>
    </location>
</feature>
<feature type="domain" description="PTS EIIC type-1" evidence="2">
    <location>
        <begin position="1"/>
        <end position="416"/>
    </location>
</feature>
<feature type="domain" description="PTS EIIB type-1" evidence="1">
    <location>
        <begin position="450"/>
        <end position="529"/>
    </location>
</feature>
<feature type="active site" description="Phosphocysteine intermediate; for EIIB activity" evidence="1">
    <location>
        <position position="472"/>
    </location>
</feature>
<name>PTUCB_LEPBD</name>
<dbReference type="EC" id="2.7.1.-"/>
<dbReference type="EMBL" id="CP001685">
    <property type="protein sequence ID" value="ACV39400.1"/>
    <property type="molecule type" value="Genomic_DNA"/>
</dbReference>
<dbReference type="RefSeq" id="WP_015769741.1">
    <property type="nucleotide sequence ID" value="NC_013192.1"/>
</dbReference>
<dbReference type="SMR" id="C7NB69"/>
<dbReference type="STRING" id="523794.Lebu_1527"/>
<dbReference type="TCDB" id="4.A.1.1.16">
    <property type="family name" value="the pts glucose-glucoside (glc) family"/>
</dbReference>
<dbReference type="KEGG" id="lba:Lebu_1527"/>
<dbReference type="eggNOG" id="COG1263">
    <property type="taxonomic scope" value="Bacteria"/>
</dbReference>
<dbReference type="eggNOG" id="COG1264">
    <property type="taxonomic scope" value="Bacteria"/>
</dbReference>
<dbReference type="HOGENOM" id="CLU_012312_1_0_0"/>
<dbReference type="OrthoDB" id="9764327at2"/>
<dbReference type="Proteomes" id="UP000001910">
    <property type="component" value="Chromosome"/>
</dbReference>
<dbReference type="GO" id="GO:0005886">
    <property type="term" value="C:plasma membrane"/>
    <property type="evidence" value="ECO:0007669"/>
    <property type="project" value="UniProtKB-SubCell"/>
</dbReference>
<dbReference type="GO" id="GO:0016301">
    <property type="term" value="F:kinase activity"/>
    <property type="evidence" value="ECO:0007669"/>
    <property type="project" value="UniProtKB-KW"/>
</dbReference>
<dbReference type="GO" id="GO:0008982">
    <property type="term" value="F:protein-N(PI)-phosphohistidine-sugar phosphotransferase activity"/>
    <property type="evidence" value="ECO:0007669"/>
    <property type="project" value="InterPro"/>
</dbReference>
<dbReference type="GO" id="GO:0090563">
    <property type="term" value="F:protein-phosphocysteine-sugar phosphotransferase activity"/>
    <property type="evidence" value="ECO:0007669"/>
    <property type="project" value="TreeGrafter"/>
</dbReference>
<dbReference type="GO" id="GO:0009401">
    <property type="term" value="P:phosphoenolpyruvate-dependent sugar phosphotransferase system"/>
    <property type="evidence" value="ECO:0007669"/>
    <property type="project" value="UniProtKB-KW"/>
</dbReference>
<dbReference type="CDD" id="cd00212">
    <property type="entry name" value="PTS_IIB_glc"/>
    <property type="match status" value="1"/>
</dbReference>
<dbReference type="Gene3D" id="3.30.1360.60">
    <property type="entry name" value="Glucose permease domain IIB"/>
    <property type="match status" value="1"/>
</dbReference>
<dbReference type="InterPro" id="IPR036878">
    <property type="entry name" value="Glu_permease_IIB"/>
</dbReference>
<dbReference type="InterPro" id="IPR018113">
    <property type="entry name" value="PTrfase_EIIB_Cys"/>
</dbReference>
<dbReference type="InterPro" id="IPR003352">
    <property type="entry name" value="PTS_EIIC"/>
</dbReference>
<dbReference type="InterPro" id="IPR013013">
    <property type="entry name" value="PTS_EIIC_1"/>
</dbReference>
<dbReference type="InterPro" id="IPR050429">
    <property type="entry name" value="PTS_Glucose_EIICBA"/>
</dbReference>
<dbReference type="InterPro" id="IPR001996">
    <property type="entry name" value="PTS_IIB_1"/>
</dbReference>
<dbReference type="InterPro" id="IPR010975">
    <property type="entry name" value="PTS_IIBC_a_glc"/>
</dbReference>
<dbReference type="NCBIfam" id="TIGR00826">
    <property type="entry name" value="EIIB_glc"/>
    <property type="match status" value="1"/>
</dbReference>
<dbReference type="NCBIfam" id="TIGR02005">
    <property type="entry name" value="PTS-IIBC-alpha"/>
    <property type="match status" value="1"/>
</dbReference>
<dbReference type="PANTHER" id="PTHR30009">
    <property type="entry name" value="CYTOCHROME C-TYPE SYNTHESIS PROTEIN AND PTS TRANSMEMBRANE COMPONENT"/>
    <property type="match status" value="1"/>
</dbReference>
<dbReference type="PANTHER" id="PTHR30009:SF12">
    <property type="entry name" value="PHOSPHOTRANSFERASE IIC COMPONENT GLVC"/>
    <property type="match status" value="1"/>
</dbReference>
<dbReference type="Pfam" id="PF00367">
    <property type="entry name" value="PTS_EIIB"/>
    <property type="match status" value="1"/>
</dbReference>
<dbReference type="Pfam" id="PF02378">
    <property type="entry name" value="PTS_EIIC"/>
    <property type="match status" value="1"/>
</dbReference>
<dbReference type="SUPFAM" id="SSF55604">
    <property type="entry name" value="Glucose permease domain IIB"/>
    <property type="match status" value="1"/>
</dbReference>
<dbReference type="PROSITE" id="PS51098">
    <property type="entry name" value="PTS_EIIB_TYPE_1"/>
    <property type="match status" value="1"/>
</dbReference>
<dbReference type="PROSITE" id="PS01035">
    <property type="entry name" value="PTS_EIIB_TYPE_1_CYS"/>
    <property type="match status" value="1"/>
</dbReference>
<dbReference type="PROSITE" id="PS51103">
    <property type="entry name" value="PTS_EIIC_TYPE_1"/>
    <property type="match status" value="1"/>
</dbReference>
<evidence type="ECO:0000255" key="1">
    <source>
        <dbReference type="PROSITE-ProRule" id="PRU00421"/>
    </source>
</evidence>
<evidence type="ECO:0000255" key="2">
    <source>
        <dbReference type="PROSITE-ProRule" id="PRU00426"/>
    </source>
</evidence>
<evidence type="ECO:0000269" key="3">
    <source>
    </source>
</evidence>